<feature type="chain" id="PRO_0000234206" description="Urease subunit gamma">
    <location>
        <begin position="1"/>
        <end position="100"/>
    </location>
</feature>
<sequence length="100" mass="11189">MELTPREKDKMLIFTAGLVAERRRERGLKLNYPEAVAYISAAVLEKAREGMSVAELMHHGTTLLTRDEVMEGVPEMISDIQVEATFPDGTKLVTVHHPIT</sequence>
<protein>
    <recommendedName>
        <fullName evidence="1">Urease subunit gamma</fullName>
        <ecNumber evidence="1">3.5.1.5</ecNumber>
    </recommendedName>
    <alternativeName>
        <fullName evidence="1">Urea amidohydrolase subunit gamma</fullName>
    </alternativeName>
</protein>
<dbReference type="EC" id="3.5.1.5" evidence="1"/>
<dbReference type="EMBL" id="CP000127">
    <property type="protein sequence ID" value="ABA59328.1"/>
    <property type="molecule type" value="Genomic_DNA"/>
</dbReference>
<dbReference type="RefSeq" id="WP_002812631.1">
    <property type="nucleotide sequence ID" value="NC_007484.1"/>
</dbReference>
<dbReference type="SMR" id="Q3J768"/>
<dbReference type="STRING" id="323261.Noc_2882"/>
<dbReference type="KEGG" id="noc:Noc_2882"/>
<dbReference type="eggNOG" id="COG0831">
    <property type="taxonomic scope" value="Bacteria"/>
</dbReference>
<dbReference type="HOGENOM" id="CLU_145825_1_0_6"/>
<dbReference type="InParanoid" id="Q3J768"/>
<dbReference type="UniPathway" id="UPA00258">
    <property type="reaction ID" value="UER00370"/>
</dbReference>
<dbReference type="Proteomes" id="UP000006838">
    <property type="component" value="Chromosome"/>
</dbReference>
<dbReference type="GO" id="GO:0005737">
    <property type="term" value="C:cytoplasm"/>
    <property type="evidence" value="ECO:0007669"/>
    <property type="project" value="UniProtKB-SubCell"/>
</dbReference>
<dbReference type="GO" id="GO:0016151">
    <property type="term" value="F:nickel cation binding"/>
    <property type="evidence" value="ECO:0007669"/>
    <property type="project" value="InterPro"/>
</dbReference>
<dbReference type="GO" id="GO:0009039">
    <property type="term" value="F:urease activity"/>
    <property type="evidence" value="ECO:0007669"/>
    <property type="project" value="UniProtKB-UniRule"/>
</dbReference>
<dbReference type="GO" id="GO:0043419">
    <property type="term" value="P:urea catabolic process"/>
    <property type="evidence" value="ECO:0007669"/>
    <property type="project" value="UniProtKB-UniRule"/>
</dbReference>
<dbReference type="CDD" id="cd00390">
    <property type="entry name" value="Urease_gamma"/>
    <property type="match status" value="1"/>
</dbReference>
<dbReference type="Gene3D" id="3.30.280.10">
    <property type="entry name" value="Urease, gamma-like subunit"/>
    <property type="match status" value="1"/>
</dbReference>
<dbReference type="HAMAP" id="MF_00739">
    <property type="entry name" value="Urease_gamma"/>
    <property type="match status" value="1"/>
</dbReference>
<dbReference type="InterPro" id="IPR012010">
    <property type="entry name" value="Urease_gamma"/>
</dbReference>
<dbReference type="InterPro" id="IPR002026">
    <property type="entry name" value="Urease_gamma/gamma-beta_su"/>
</dbReference>
<dbReference type="InterPro" id="IPR036463">
    <property type="entry name" value="Urease_gamma_sf"/>
</dbReference>
<dbReference type="InterPro" id="IPR050069">
    <property type="entry name" value="Urease_subunit"/>
</dbReference>
<dbReference type="NCBIfam" id="NF009712">
    <property type="entry name" value="PRK13241.1"/>
    <property type="match status" value="1"/>
</dbReference>
<dbReference type="NCBIfam" id="TIGR00193">
    <property type="entry name" value="urease_gam"/>
    <property type="match status" value="1"/>
</dbReference>
<dbReference type="PANTHER" id="PTHR33569">
    <property type="entry name" value="UREASE"/>
    <property type="match status" value="1"/>
</dbReference>
<dbReference type="PANTHER" id="PTHR33569:SF1">
    <property type="entry name" value="UREASE"/>
    <property type="match status" value="1"/>
</dbReference>
<dbReference type="Pfam" id="PF00547">
    <property type="entry name" value="Urease_gamma"/>
    <property type="match status" value="1"/>
</dbReference>
<dbReference type="PIRSF" id="PIRSF001223">
    <property type="entry name" value="Urease_gamma"/>
    <property type="match status" value="1"/>
</dbReference>
<dbReference type="SUPFAM" id="SSF54111">
    <property type="entry name" value="Urease, gamma-subunit"/>
    <property type="match status" value="1"/>
</dbReference>
<organism>
    <name type="scientific">Nitrosococcus oceani (strain ATCC 19707 / BCRC 17464 / JCM 30415 / NCIMB 11848 / C-107)</name>
    <dbReference type="NCBI Taxonomy" id="323261"/>
    <lineage>
        <taxon>Bacteria</taxon>
        <taxon>Pseudomonadati</taxon>
        <taxon>Pseudomonadota</taxon>
        <taxon>Gammaproteobacteria</taxon>
        <taxon>Chromatiales</taxon>
        <taxon>Chromatiaceae</taxon>
        <taxon>Nitrosococcus</taxon>
    </lineage>
</organism>
<evidence type="ECO:0000255" key="1">
    <source>
        <dbReference type="HAMAP-Rule" id="MF_00739"/>
    </source>
</evidence>
<comment type="catalytic activity">
    <reaction evidence="1">
        <text>urea + 2 H2O + H(+) = hydrogencarbonate + 2 NH4(+)</text>
        <dbReference type="Rhea" id="RHEA:20557"/>
        <dbReference type="ChEBI" id="CHEBI:15377"/>
        <dbReference type="ChEBI" id="CHEBI:15378"/>
        <dbReference type="ChEBI" id="CHEBI:16199"/>
        <dbReference type="ChEBI" id="CHEBI:17544"/>
        <dbReference type="ChEBI" id="CHEBI:28938"/>
        <dbReference type="EC" id="3.5.1.5"/>
    </reaction>
</comment>
<comment type="pathway">
    <text evidence="1">Nitrogen metabolism; urea degradation; CO(2) and NH(3) from urea (urease route): step 1/1.</text>
</comment>
<comment type="subunit">
    <text evidence="1">Heterotrimer of UreA (gamma), UreB (beta) and UreC (alpha) subunits. Three heterotrimers associate to form the active enzyme.</text>
</comment>
<comment type="subcellular location">
    <subcellularLocation>
        <location evidence="1">Cytoplasm</location>
    </subcellularLocation>
</comment>
<comment type="similarity">
    <text evidence="1">Belongs to the urease gamma subunit family.</text>
</comment>
<proteinExistence type="inferred from homology"/>
<reference key="1">
    <citation type="journal article" date="2006" name="Appl. Environ. Microbiol.">
        <title>Complete genome sequence of the marine, chemolithoautotrophic, ammonia-oxidizing bacterium Nitrosococcus oceani ATCC 19707.</title>
        <authorList>
            <person name="Klotz M.G."/>
            <person name="Arp D.J."/>
            <person name="Chain P.S.G."/>
            <person name="El-Sheikh A.F."/>
            <person name="Hauser L.J."/>
            <person name="Hommes N.G."/>
            <person name="Larimer F.W."/>
            <person name="Malfatti S.A."/>
            <person name="Norton J.M."/>
            <person name="Poret-Peterson A.T."/>
            <person name="Vergez L.M."/>
            <person name="Ward B.B."/>
        </authorList>
    </citation>
    <scope>NUCLEOTIDE SEQUENCE [LARGE SCALE GENOMIC DNA]</scope>
    <source>
        <strain>ATCC 19707 / BCRC 17464 / JCM 30415 / NCIMB 11848 / C-107</strain>
    </source>
</reference>
<name>URE3_NITOC</name>
<gene>
    <name evidence="1" type="primary">ureA</name>
    <name type="ordered locus">Noc_2882</name>
</gene>
<accession>Q3J768</accession>
<keyword id="KW-0963">Cytoplasm</keyword>
<keyword id="KW-0378">Hydrolase</keyword>
<keyword id="KW-1185">Reference proteome</keyword>